<comment type="function">
    <text evidence="1">Catalyzes the NADPH-dependent rearrangement and reduction of 1-deoxy-D-xylulose-5-phosphate (DXP) to 2-C-methyl-D-erythritol 4-phosphate (MEP).</text>
</comment>
<comment type="catalytic activity">
    <reaction evidence="1">
        <text>2-C-methyl-D-erythritol 4-phosphate + NADP(+) = 1-deoxy-D-xylulose 5-phosphate + NADPH + H(+)</text>
        <dbReference type="Rhea" id="RHEA:13717"/>
        <dbReference type="ChEBI" id="CHEBI:15378"/>
        <dbReference type="ChEBI" id="CHEBI:57783"/>
        <dbReference type="ChEBI" id="CHEBI:57792"/>
        <dbReference type="ChEBI" id="CHEBI:58262"/>
        <dbReference type="ChEBI" id="CHEBI:58349"/>
        <dbReference type="EC" id="1.1.1.267"/>
    </reaction>
    <physiologicalReaction direction="right-to-left" evidence="1">
        <dbReference type="Rhea" id="RHEA:13719"/>
    </physiologicalReaction>
</comment>
<comment type="cofactor">
    <cofactor evidence="1">
        <name>Mg(2+)</name>
        <dbReference type="ChEBI" id="CHEBI:18420"/>
    </cofactor>
    <cofactor evidence="1">
        <name>Mn(2+)</name>
        <dbReference type="ChEBI" id="CHEBI:29035"/>
    </cofactor>
</comment>
<comment type="pathway">
    <text evidence="1">Isoprenoid biosynthesis; isopentenyl diphosphate biosynthesis via DXP pathway; isopentenyl diphosphate from 1-deoxy-D-xylulose 5-phosphate: step 1/6.</text>
</comment>
<comment type="similarity">
    <text evidence="1">Belongs to the DXR family.</text>
</comment>
<gene>
    <name evidence="1" type="primary">dxr</name>
    <name type="ordered locus">Bxeno_A2729</name>
    <name type="ORF">Bxe_A1688</name>
</gene>
<proteinExistence type="inferred from homology"/>
<protein>
    <recommendedName>
        <fullName evidence="1">1-deoxy-D-xylulose 5-phosphate reductoisomerase</fullName>
        <shortName evidence="1">DXP reductoisomerase</shortName>
        <ecNumber evidence="1">1.1.1.267</ecNumber>
    </recommendedName>
    <alternativeName>
        <fullName evidence="1">1-deoxyxylulose-5-phosphate reductoisomerase</fullName>
    </alternativeName>
    <alternativeName>
        <fullName evidence="1">2-C-methyl-D-erythritol 4-phosphate synthase</fullName>
    </alternativeName>
</protein>
<keyword id="KW-0414">Isoprene biosynthesis</keyword>
<keyword id="KW-0464">Manganese</keyword>
<keyword id="KW-0479">Metal-binding</keyword>
<keyword id="KW-0521">NADP</keyword>
<keyword id="KW-0560">Oxidoreductase</keyword>
<keyword id="KW-1185">Reference proteome</keyword>
<reference key="1">
    <citation type="journal article" date="2006" name="Proc. Natl. Acad. Sci. U.S.A.">
        <title>Burkholderia xenovorans LB400 harbors a multi-replicon, 9.73-Mbp genome shaped for versatility.</title>
        <authorList>
            <person name="Chain P.S.G."/>
            <person name="Denef V.J."/>
            <person name="Konstantinidis K.T."/>
            <person name="Vergez L.M."/>
            <person name="Agullo L."/>
            <person name="Reyes V.L."/>
            <person name="Hauser L."/>
            <person name="Cordova M."/>
            <person name="Gomez L."/>
            <person name="Gonzalez M."/>
            <person name="Land M."/>
            <person name="Lao V."/>
            <person name="Larimer F."/>
            <person name="LiPuma J.J."/>
            <person name="Mahenthiralingam E."/>
            <person name="Malfatti S.A."/>
            <person name="Marx C.J."/>
            <person name="Parnell J.J."/>
            <person name="Ramette A."/>
            <person name="Richardson P."/>
            <person name="Seeger M."/>
            <person name="Smith D."/>
            <person name="Spilker T."/>
            <person name="Sul W.J."/>
            <person name="Tsoi T.V."/>
            <person name="Ulrich L.E."/>
            <person name="Zhulin I.B."/>
            <person name="Tiedje J.M."/>
        </authorList>
    </citation>
    <scope>NUCLEOTIDE SEQUENCE [LARGE SCALE GENOMIC DNA]</scope>
    <source>
        <strain>LB400</strain>
    </source>
</reference>
<accession>Q13XC2</accession>
<dbReference type="EC" id="1.1.1.267" evidence="1"/>
<dbReference type="EMBL" id="CP000270">
    <property type="protein sequence ID" value="ABE31267.1"/>
    <property type="molecule type" value="Genomic_DNA"/>
</dbReference>
<dbReference type="RefSeq" id="WP_011488862.1">
    <property type="nucleotide sequence ID" value="NC_007951.1"/>
</dbReference>
<dbReference type="SMR" id="Q13XC2"/>
<dbReference type="STRING" id="266265.Bxe_A1688"/>
<dbReference type="KEGG" id="bxb:DR64_3853"/>
<dbReference type="KEGG" id="bxe:Bxe_A1688"/>
<dbReference type="PATRIC" id="fig|266265.5.peg.2860"/>
<dbReference type="eggNOG" id="COG0743">
    <property type="taxonomic scope" value="Bacteria"/>
</dbReference>
<dbReference type="OrthoDB" id="9806546at2"/>
<dbReference type="UniPathway" id="UPA00056">
    <property type="reaction ID" value="UER00092"/>
</dbReference>
<dbReference type="Proteomes" id="UP000001817">
    <property type="component" value="Chromosome 1"/>
</dbReference>
<dbReference type="GO" id="GO:0030604">
    <property type="term" value="F:1-deoxy-D-xylulose-5-phosphate reductoisomerase activity"/>
    <property type="evidence" value="ECO:0007669"/>
    <property type="project" value="UniProtKB-UniRule"/>
</dbReference>
<dbReference type="GO" id="GO:0030145">
    <property type="term" value="F:manganese ion binding"/>
    <property type="evidence" value="ECO:0007669"/>
    <property type="project" value="TreeGrafter"/>
</dbReference>
<dbReference type="GO" id="GO:0070402">
    <property type="term" value="F:NADPH binding"/>
    <property type="evidence" value="ECO:0007669"/>
    <property type="project" value="InterPro"/>
</dbReference>
<dbReference type="GO" id="GO:0051484">
    <property type="term" value="P:isopentenyl diphosphate biosynthetic process, methylerythritol 4-phosphate pathway involved in terpenoid biosynthetic process"/>
    <property type="evidence" value="ECO:0007669"/>
    <property type="project" value="TreeGrafter"/>
</dbReference>
<dbReference type="FunFam" id="1.10.1740.10:FF:000004">
    <property type="entry name" value="1-deoxy-D-xylulose 5-phosphate reductoisomerase"/>
    <property type="match status" value="1"/>
</dbReference>
<dbReference type="FunFam" id="3.40.50.720:FF:000045">
    <property type="entry name" value="1-deoxy-D-xylulose 5-phosphate reductoisomerase"/>
    <property type="match status" value="1"/>
</dbReference>
<dbReference type="Gene3D" id="1.10.1740.10">
    <property type="match status" value="1"/>
</dbReference>
<dbReference type="Gene3D" id="3.40.50.720">
    <property type="entry name" value="NAD(P)-binding Rossmann-like Domain"/>
    <property type="match status" value="1"/>
</dbReference>
<dbReference type="HAMAP" id="MF_00183">
    <property type="entry name" value="DXP_reductoisom"/>
    <property type="match status" value="1"/>
</dbReference>
<dbReference type="InterPro" id="IPR003821">
    <property type="entry name" value="DXP_reductoisomerase"/>
</dbReference>
<dbReference type="InterPro" id="IPR013644">
    <property type="entry name" value="DXP_reductoisomerase_C"/>
</dbReference>
<dbReference type="InterPro" id="IPR013512">
    <property type="entry name" value="DXP_reductoisomerase_N"/>
</dbReference>
<dbReference type="InterPro" id="IPR026877">
    <property type="entry name" value="DXPR_C"/>
</dbReference>
<dbReference type="InterPro" id="IPR036169">
    <property type="entry name" value="DXPR_C_sf"/>
</dbReference>
<dbReference type="InterPro" id="IPR036291">
    <property type="entry name" value="NAD(P)-bd_dom_sf"/>
</dbReference>
<dbReference type="NCBIfam" id="TIGR00243">
    <property type="entry name" value="Dxr"/>
    <property type="match status" value="1"/>
</dbReference>
<dbReference type="NCBIfam" id="NF003938">
    <property type="entry name" value="PRK05447.1-1"/>
    <property type="match status" value="1"/>
</dbReference>
<dbReference type="NCBIfam" id="NF009114">
    <property type="entry name" value="PRK12464.1"/>
    <property type="match status" value="1"/>
</dbReference>
<dbReference type="PANTHER" id="PTHR30525">
    <property type="entry name" value="1-DEOXY-D-XYLULOSE 5-PHOSPHATE REDUCTOISOMERASE"/>
    <property type="match status" value="1"/>
</dbReference>
<dbReference type="PANTHER" id="PTHR30525:SF0">
    <property type="entry name" value="1-DEOXY-D-XYLULOSE 5-PHOSPHATE REDUCTOISOMERASE, CHLOROPLASTIC"/>
    <property type="match status" value="1"/>
</dbReference>
<dbReference type="Pfam" id="PF08436">
    <property type="entry name" value="DXP_redisom_C"/>
    <property type="match status" value="1"/>
</dbReference>
<dbReference type="Pfam" id="PF02670">
    <property type="entry name" value="DXP_reductoisom"/>
    <property type="match status" value="1"/>
</dbReference>
<dbReference type="Pfam" id="PF13288">
    <property type="entry name" value="DXPR_C"/>
    <property type="match status" value="1"/>
</dbReference>
<dbReference type="PIRSF" id="PIRSF006205">
    <property type="entry name" value="Dxp_reductismrs"/>
    <property type="match status" value="1"/>
</dbReference>
<dbReference type="SUPFAM" id="SSF69055">
    <property type="entry name" value="1-deoxy-D-xylulose-5-phosphate reductoisomerase, C-terminal domain"/>
    <property type="match status" value="1"/>
</dbReference>
<dbReference type="SUPFAM" id="SSF55347">
    <property type="entry name" value="Glyceraldehyde-3-phosphate dehydrogenase-like, C-terminal domain"/>
    <property type="match status" value="1"/>
</dbReference>
<dbReference type="SUPFAM" id="SSF51735">
    <property type="entry name" value="NAD(P)-binding Rossmann-fold domains"/>
    <property type="match status" value="1"/>
</dbReference>
<sequence>MQKRLTLLGSTGSIGDSTLDVVARHPERFSVYALSAHRNGDKLVEQCLRFEPEVAVVGDADTAARVAAKLREAGCKTEVTYGPQALVDVSESDGCDTVVAAIVGAAGLAPSLAAARAGKRILLANKEALVMSGAIFMDAVRDNGAVLLPVDSEHNAIFQCLPREAALHGGVSKIILTASGGPFRTREPATLVDVTPEEACKHPNWVMGRKISVDSATMMNKGLEVIEAHWLFDLPGERIDVLIHPQSVIHSLVSYADGSVLAQLGNPDMRTPIAHALAFPDRVDSGVAQLDLAQIASLSFEKPDYARFPCLALAMKALAEGGVASAALNAANEIAVEAFLSRQIGFMAIAQVVDAVLNTLPNRSAHALEDVLEADAAARRAAAEFIARLPDGARRTERAVQ</sequence>
<evidence type="ECO:0000255" key="1">
    <source>
        <dbReference type="HAMAP-Rule" id="MF_00183"/>
    </source>
</evidence>
<organism>
    <name type="scientific">Paraburkholderia xenovorans (strain LB400)</name>
    <dbReference type="NCBI Taxonomy" id="266265"/>
    <lineage>
        <taxon>Bacteria</taxon>
        <taxon>Pseudomonadati</taxon>
        <taxon>Pseudomonadota</taxon>
        <taxon>Betaproteobacteria</taxon>
        <taxon>Burkholderiales</taxon>
        <taxon>Burkholderiaceae</taxon>
        <taxon>Paraburkholderia</taxon>
    </lineage>
</organism>
<feature type="chain" id="PRO_1000020235" description="1-deoxy-D-xylulose 5-phosphate reductoisomerase">
    <location>
        <begin position="1"/>
        <end position="401"/>
    </location>
</feature>
<feature type="binding site" evidence="1">
    <location>
        <position position="11"/>
    </location>
    <ligand>
        <name>NADPH</name>
        <dbReference type="ChEBI" id="CHEBI:57783"/>
    </ligand>
</feature>
<feature type="binding site" evidence="1">
    <location>
        <position position="12"/>
    </location>
    <ligand>
        <name>NADPH</name>
        <dbReference type="ChEBI" id="CHEBI:57783"/>
    </ligand>
</feature>
<feature type="binding site" evidence="1">
    <location>
        <position position="13"/>
    </location>
    <ligand>
        <name>NADPH</name>
        <dbReference type="ChEBI" id="CHEBI:57783"/>
    </ligand>
</feature>
<feature type="binding site" evidence="1">
    <location>
        <position position="14"/>
    </location>
    <ligand>
        <name>NADPH</name>
        <dbReference type="ChEBI" id="CHEBI:57783"/>
    </ligand>
</feature>
<feature type="binding site" evidence="1">
    <location>
        <position position="38"/>
    </location>
    <ligand>
        <name>NADPH</name>
        <dbReference type="ChEBI" id="CHEBI:57783"/>
    </ligand>
</feature>
<feature type="binding site" evidence="1">
    <location>
        <position position="39"/>
    </location>
    <ligand>
        <name>NADPH</name>
        <dbReference type="ChEBI" id="CHEBI:57783"/>
    </ligand>
</feature>
<feature type="binding site" evidence="1">
    <location>
        <position position="125"/>
    </location>
    <ligand>
        <name>NADPH</name>
        <dbReference type="ChEBI" id="CHEBI:57783"/>
    </ligand>
</feature>
<feature type="binding site" evidence="1">
    <location>
        <position position="126"/>
    </location>
    <ligand>
        <name>1-deoxy-D-xylulose 5-phosphate</name>
        <dbReference type="ChEBI" id="CHEBI:57792"/>
    </ligand>
</feature>
<feature type="binding site" evidence="1">
    <location>
        <position position="127"/>
    </location>
    <ligand>
        <name>NADPH</name>
        <dbReference type="ChEBI" id="CHEBI:57783"/>
    </ligand>
</feature>
<feature type="binding site" evidence="1">
    <location>
        <position position="151"/>
    </location>
    <ligand>
        <name>Mn(2+)</name>
        <dbReference type="ChEBI" id="CHEBI:29035"/>
    </ligand>
</feature>
<feature type="binding site" evidence="1">
    <location>
        <position position="152"/>
    </location>
    <ligand>
        <name>1-deoxy-D-xylulose 5-phosphate</name>
        <dbReference type="ChEBI" id="CHEBI:57792"/>
    </ligand>
</feature>
<feature type="binding site" evidence="1">
    <location>
        <position position="153"/>
    </location>
    <ligand>
        <name>1-deoxy-D-xylulose 5-phosphate</name>
        <dbReference type="ChEBI" id="CHEBI:57792"/>
    </ligand>
</feature>
<feature type="binding site" evidence="1">
    <location>
        <position position="153"/>
    </location>
    <ligand>
        <name>Mn(2+)</name>
        <dbReference type="ChEBI" id="CHEBI:29035"/>
    </ligand>
</feature>
<feature type="binding site" evidence="1">
    <location>
        <position position="179"/>
    </location>
    <ligand>
        <name>1-deoxy-D-xylulose 5-phosphate</name>
        <dbReference type="ChEBI" id="CHEBI:57792"/>
    </ligand>
</feature>
<feature type="binding site" evidence="1">
    <location>
        <position position="202"/>
    </location>
    <ligand>
        <name>1-deoxy-D-xylulose 5-phosphate</name>
        <dbReference type="ChEBI" id="CHEBI:57792"/>
    </ligand>
</feature>
<feature type="binding site" evidence="1">
    <location>
        <position position="208"/>
    </location>
    <ligand>
        <name>NADPH</name>
        <dbReference type="ChEBI" id="CHEBI:57783"/>
    </ligand>
</feature>
<feature type="binding site" evidence="1">
    <location>
        <position position="215"/>
    </location>
    <ligand>
        <name>1-deoxy-D-xylulose 5-phosphate</name>
        <dbReference type="ChEBI" id="CHEBI:57792"/>
    </ligand>
</feature>
<feature type="binding site" evidence="1">
    <location>
        <position position="220"/>
    </location>
    <ligand>
        <name>1-deoxy-D-xylulose 5-phosphate</name>
        <dbReference type="ChEBI" id="CHEBI:57792"/>
    </ligand>
</feature>
<feature type="binding site" evidence="1">
    <location>
        <position position="221"/>
    </location>
    <ligand>
        <name>1-deoxy-D-xylulose 5-phosphate</name>
        <dbReference type="ChEBI" id="CHEBI:57792"/>
    </ligand>
</feature>
<feature type="binding site" evidence="1">
    <location>
        <position position="224"/>
    </location>
    <ligand>
        <name>1-deoxy-D-xylulose 5-phosphate</name>
        <dbReference type="ChEBI" id="CHEBI:57792"/>
    </ligand>
</feature>
<feature type="binding site" evidence="1">
    <location>
        <position position="224"/>
    </location>
    <ligand>
        <name>Mn(2+)</name>
        <dbReference type="ChEBI" id="CHEBI:29035"/>
    </ligand>
</feature>
<name>DXR_PARXL</name>